<comment type="function">
    <text evidence="1">Purine nucleoside phosphorylase which is highly specific for 6-oxopurine nucleosides. Cleaves guanosine or inosine to respective bases and sugar-1-phosphate molecules. Involved in purine salvage.</text>
</comment>
<comment type="catalytic activity">
    <reaction evidence="1">
        <text>a purine D-ribonucleoside + phosphate = a purine nucleobase + alpha-D-ribose 1-phosphate</text>
        <dbReference type="Rhea" id="RHEA:19805"/>
        <dbReference type="ChEBI" id="CHEBI:26386"/>
        <dbReference type="ChEBI" id="CHEBI:43474"/>
        <dbReference type="ChEBI" id="CHEBI:57720"/>
        <dbReference type="ChEBI" id="CHEBI:142355"/>
        <dbReference type="EC" id="2.4.2.1"/>
    </reaction>
</comment>
<comment type="pathway">
    <text evidence="1">Purine metabolism; purine nucleoside salvage.</text>
</comment>
<comment type="subunit">
    <text evidence="1">Homohexamer. Dimer of a homotrimer.</text>
</comment>
<comment type="miscellaneous">
    <text evidence="1">Although this enzyme belongs to the family of MTA phosphorylases based on sequence homology, it has been shown that conserved amino acid substitutions in the substrate binding pocket convert the substrate specificity of this enzyme from 6-aminopurines to 6-oxopurines.</text>
</comment>
<comment type="similarity">
    <text evidence="1">Belongs to the PNP/MTAP phosphorylase family. MTAP subfamily.</text>
</comment>
<gene>
    <name type="ordered locus">Dtur_0928</name>
</gene>
<sequence>MRIAIIGGTGVYDPKFLENPEEIKVSTPYGEVKLLKGIYQGEEVGFLARHGAGHTVPPHRINYKANMWALKSLGVERILSTTAVGSLKLNLVPGDLVILDQFIDFTKNRDHTFYNGDDGKVIHIDFTNPYCPELRNILYETSKEIGIKAHPFGTYVCTEGPRFETPAEIKMYSFFGDVVGMTNVPEVILARELEICYASVSLVTNYAAGISPNPLTHSEVLEVMTQNIEKVRKLFAAVIPKIPKERNCICKNALKEYREKGLL</sequence>
<organism>
    <name type="scientific">Dictyoglomus turgidum (strain DSM 6724 / Z-1310)</name>
    <dbReference type="NCBI Taxonomy" id="515635"/>
    <lineage>
        <taxon>Bacteria</taxon>
        <taxon>Pseudomonadati</taxon>
        <taxon>Dictyoglomota</taxon>
        <taxon>Dictyoglomia</taxon>
        <taxon>Dictyoglomales</taxon>
        <taxon>Dictyoglomaceae</taxon>
        <taxon>Dictyoglomus</taxon>
    </lineage>
</organism>
<feature type="chain" id="PRO_0000415081" description="Probable 6-oxopurine nucleoside phosphorylase">
    <location>
        <begin position="1"/>
        <end position="263"/>
    </location>
</feature>
<feature type="binding site" evidence="1">
    <location>
        <position position="9"/>
    </location>
    <ligand>
        <name>phosphate</name>
        <dbReference type="ChEBI" id="CHEBI:43474"/>
    </ligand>
</feature>
<feature type="binding site" evidence="1">
    <location>
        <begin position="49"/>
        <end position="50"/>
    </location>
    <ligand>
        <name>phosphate</name>
        <dbReference type="ChEBI" id="CHEBI:43474"/>
    </ligand>
</feature>
<feature type="binding site" evidence="1">
    <location>
        <begin position="82"/>
        <end position="83"/>
    </location>
    <ligand>
        <name>phosphate</name>
        <dbReference type="ChEBI" id="CHEBI:43474"/>
    </ligand>
</feature>
<feature type="binding site" evidence="1">
    <location>
        <position position="181"/>
    </location>
    <ligand>
        <name>substrate</name>
    </ligand>
</feature>
<feature type="binding site" evidence="1">
    <location>
        <position position="182"/>
    </location>
    <ligand>
        <name>phosphate</name>
        <dbReference type="ChEBI" id="CHEBI:43474"/>
    </ligand>
</feature>
<feature type="binding site" evidence="1">
    <location>
        <begin position="205"/>
        <end position="207"/>
    </location>
    <ligand>
        <name>substrate</name>
    </ligand>
</feature>
<feature type="site" description="Important for substrate specificity" evidence="1">
    <location>
        <position position="164"/>
    </location>
</feature>
<feature type="site" description="Important for substrate specificity" evidence="1">
    <location>
        <position position="217"/>
    </location>
</feature>
<protein>
    <recommendedName>
        <fullName evidence="1">Probable 6-oxopurine nucleoside phosphorylase</fullName>
        <ecNumber evidence="1">2.4.2.1</ecNumber>
    </recommendedName>
    <alternativeName>
        <fullName evidence="1">Purine nucleoside phosphorylase</fullName>
        <shortName evidence="1">PNP</shortName>
    </alternativeName>
</protein>
<proteinExistence type="inferred from homology"/>
<reference key="1">
    <citation type="journal article" date="2016" name="Front. Microbiol.">
        <title>The complete genome sequence of hyperthermophile Dictyoglomus turgidum DSM 6724 reveals a specialized carbohydrate fermentor.</title>
        <authorList>
            <person name="Brumm P.J."/>
            <person name="Gowda K."/>
            <person name="Robb F.T."/>
            <person name="Mead D.A."/>
        </authorList>
    </citation>
    <scope>NUCLEOTIDE SEQUENCE [LARGE SCALE GENOMIC DNA]</scope>
    <source>
        <strain>DSM 6724 / Z-1310</strain>
    </source>
</reference>
<evidence type="ECO:0000255" key="1">
    <source>
        <dbReference type="HAMAP-Rule" id="MF_01963"/>
    </source>
</evidence>
<keyword id="KW-0328">Glycosyltransferase</keyword>
<keyword id="KW-0660">Purine salvage</keyword>
<keyword id="KW-1185">Reference proteome</keyword>
<keyword id="KW-0808">Transferase</keyword>
<name>PNPH_DICTD</name>
<accession>B8E181</accession>
<dbReference type="EC" id="2.4.2.1" evidence="1"/>
<dbReference type="EMBL" id="CP001251">
    <property type="protein sequence ID" value="ACK42209.1"/>
    <property type="molecule type" value="Genomic_DNA"/>
</dbReference>
<dbReference type="RefSeq" id="YP_002352823.1">
    <property type="nucleotide sequence ID" value="NC_011661.1"/>
</dbReference>
<dbReference type="SMR" id="B8E181"/>
<dbReference type="FunCoup" id="B8E181">
    <property type="interactions" value="226"/>
</dbReference>
<dbReference type="STRING" id="515635.Dtur_0928"/>
<dbReference type="EnsemblBacteria" id="ACK42209">
    <property type="protein sequence ID" value="ACK42209"/>
    <property type="gene ID" value="Dtur_0928"/>
</dbReference>
<dbReference type="KEGG" id="dtu:Dtur_0928"/>
<dbReference type="PATRIC" id="fig|515635.4.peg.965"/>
<dbReference type="eggNOG" id="COG0005">
    <property type="taxonomic scope" value="Bacteria"/>
</dbReference>
<dbReference type="HOGENOM" id="CLU_054456_0_2_0"/>
<dbReference type="InParanoid" id="B8E181"/>
<dbReference type="OrthoDB" id="1523230at2"/>
<dbReference type="UniPathway" id="UPA00606"/>
<dbReference type="Proteomes" id="UP000007719">
    <property type="component" value="Chromosome"/>
</dbReference>
<dbReference type="GO" id="GO:0005829">
    <property type="term" value="C:cytosol"/>
    <property type="evidence" value="ECO:0000318"/>
    <property type="project" value="GO_Central"/>
</dbReference>
<dbReference type="GO" id="GO:0017061">
    <property type="term" value="F:S-methyl-5-thioadenosine phosphorylase activity"/>
    <property type="evidence" value="ECO:0000318"/>
    <property type="project" value="GO_Central"/>
</dbReference>
<dbReference type="GO" id="GO:0019509">
    <property type="term" value="P:L-methionine salvage from methylthioadenosine"/>
    <property type="evidence" value="ECO:0000318"/>
    <property type="project" value="GO_Central"/>
</dbReference>
<dbReference type="GO" id="GO:0006166">
    <property type="term" value="P:purine ribonucleoside salvage"/>
    <property type="evidence" value="ECO:0007669"/>
    <property type="project" value="UniProtKB-UniRule"/>
</dbReference>
<dbReference type="CDD" id="cd09010">
    <property type="entry name" value="MTAP_SsMTAPII_like_MTIP"/>
    <property type="match status" value="1"/>
</dbReference>
<dbReference type="FunFam" id="3.40.50.1580:FF:000012">
    <property type="entry name" value="Probable 6-oxopurine nucleoside phosphorylase"/>
    <property type="match status" value="1"/>
</dbReference>
<dbReference type="Gene3D" id="3.40.50.1580">
    <property type="entry name" value="Nucleoside phosphorylase domain"/>
    <property type="match status" value="1"/>
</dbReference>
<dbReference type="HAMAP" id="MF_01963">
    <property type="entry name" value="MTAP"/>
    <property type="match status" value="1"/>
</dbReference>
<dbReference type="InterPro" id="IPR010044">
    <property type="entry name" value="MTAP"/>
</dbReference>
<dbReference type="InterPro" id="IPR000845">
    <property type="entry name" value="Nucleoside_phosphorylase_d"/>
</dbReference>
<dbReference type="InterPro" id="IPR035994">
    <property type="entry name" value="Nucleoside_phosphorylase_sf"/>
</dbReference>
<dbReference type="InterPro" id="IPR018099">
    <property type="entry name" value="Purine_phosphorylase-2_CS"/>
</dbReference>
<dbReference type="NCBIfam" id="TIGR01694">
    <property type="entry name" value="MTAP"/>
    <property type="match status" value="1"/>
</dbReference>
<dbReference type="NCBIfam" id="NF006599">
    <property type="entry name" value="PRK09136.1"/>
    <property type="match status" value="1"/>
</dbReference>
<dbReference type="PANTHER" id="PTHR42679">
    <property type="entry name" value="S-METHYL-5'-THIOADENOSINE PHOSPHORYLASE"/>
    <property type="match status" value="1"/>
</dbReference>
<dbReference type="PANTHER" id="PTHR42679:SF2">
    <property type="entry name" value="S-METHYL-5'-THIOADENOSINE PHOSPHORYLASE"/>
    <property type="match status" value="1"/>
</dbReference>
<dbReference type="Pfam" id="PF01048">
    <property type="entry name" value="PNP_UDP_1"/>
    <property type="match status" value="1"/>
</dbReference>
<dbReference type="SUPFAM" id="SSF53167">
    <property type="entry name" value="Purine and uridine phosphorylases"/>
    <property type="match status" value="1"/>
</dbReference>
<dbReference type="PROSITE" id="PS01240">
    <property type="entry name" value="PNP_MTAP_2"/>
    <property type="match status" value="1"/>
</dbReference>